<reference key="1">
    <citation type="journal article" date="2008" name="J. Bacteriol.">
        <title>The pangenome structure of Escherichia coli: comparative genomic analysis of E. coli commensal and pathogenic isolates.</title>
        <authorList>
            <person name="Rasko D.A."/>
            <person name="Rosovitz M.J."/>
            <person name="Myers G.S.A."/>
            <person name="Mongodin E.F."/>
            <person name="Fricke W.F."/>
            <person name="Gajer P."/>
            <person name="Crabtree J."/>
            <person name="Sebaihia M."/>
            <person name="Thomson N.R."/>
            <person name="Chaudhuri R."/>
            <person name="Henderson I.R."/>
            <person name="Sperandio V."/>
            <person name="Ravel J."/>
        </authorList>
    </citation>
    <scope>NUCLEOTIDE SEQUENCE [LARGE SCALE GENOMIC DNA]</scope>
    <source>
        <strain>HS</strain>
    </source>
</reference>
<evidence type="ECO:0000255" key="1">
    <source>
        <dbReference type="HAMAP-Rule" id="MF_01043"/>
    </source>
</evidence>
<dbReference type="EC" id="2.3.1.15" evidence="1"/>
<dbReference type="EC" id="2.3.1.n5" evidence="1"/>
<dbReference type="EMBL" id="CP000802">
    <property type="protein sequence ID" value="ABV07468.1"/>
    <property type="molecule type" value="Genomic_DNA"/>
</dbReference>
<dbReference type="RefSeq" id="WP_001272796.1">
    <property type="nucleotide sequence ID" value="NC_009800.1"/>
</dbReference>
<dbReference type="SMR" id="A8A4L4"/>
<dbReference type="GeneID" id="93778934"/>
<dbReference type="KEGG" id="ecx:EcHS_A3237"/>
<dbReference type="HOGENOM" id="CLU_081254_0_2_6"/>
<dbReference type="UniPathway" id="UPA00085"/>
<dbReference type="GO" id="GO:0005886">
    <property type="term" value="C:plasma membrane"/>
    <property type="evidence" value="ECO:0007669"/>
    <property type="project" value="UniProtKB-SubCell"/>
</dbReference>
<dbReference type="GO" id="GO:0043772">
    <property type="term" value="F:acyl-phosphate glycerol-3-phosphate acyltransferase activity"/>
    <property type="evidence" value="ECO:0007669"/>
    <property type="project" value="InterPro"/>
</dbReference>
<dbReference type="GO" id="GO:0004366">
    <property type="term" value="F:glycerol-3-phosphate O-acyltransferase activity"/>
    <property type="evidence" value="ECO:0007669"/>
    <property type="project" value="UniProtKB-UniRule"/>
</dbReference>
<dbReference type="GO" id="GO:0008654">
    <property type="term" value="P:phospholipid biosynthetic process"/>
    <property type="evidence" value="ECO:0007669"/>
    <property type="project" value="UniProtKB-UniRule"/>
</dbReference>
<dbReference type="HAMAP" id="MF_01043">
    <property type="entry name" value="PlsY"/>
    <property type="match status" value="1"/>
</dbReference>
<dbReference type="InterPro" id="IPR003811">
    <property type="entry name" value="G3P_acylTferase_PlsY"/>
</dbReference>
<dbReference type="NCBIfam" id="TIGR00023">
    <property type="entry name" value="glycerol-3-phosphate 1-O-acyltransferase PlsY"/>
    <property type="match status" value="1"/>
</dbReference>
<dbReference type="PANTHER" id="PTHR30309:SF0">
    <property type="entry name" value="GLYCEROL-3-PHOSPHATE ACYLTRANSFERASE-RELATED"/>
    <property type="match status" value="1"/>
</dbReference>
<dbReference type="PANTHER" id="PTHR30309">
    <property type="entry name" value="INNER MEMBRANE PROTEIN YGIH"/>
    <property type="match status" value="1"/>
</dbReference>
<dbReference type="Pfam" id="PF02660">
    <property type="entry name" value="G3P_acyltransf"/>
    <property type="match status" value="1"/>
</dbReference>
<dbReference type="SMART" id="SM01207">
    <property type="entry name" value="G3P_acyltransf"/>
    <property type="match status" value="1"/>
</dbReference>
<name>PLSY_ECOHS</name>
<proteinExistence type="inferred from homology"/>
<accession>A8A4L4</accession>
<feature type="chain" id="PRO_1000064170" description="Glycerol-3-phosphate acyltransferase">
    <location>
        <begin position="1"/>
        <end position="205"/>
    </location>
</feature>
<feature type="topological domain" description="Periplasmic" evidence="1">
    <location>
        <begin position="1"/>
        <end position="3"/>
    </location>
</feature>
<feature type="transmembrane region" description="Helical" evidence="1">
    <location>
        <begin position="4"/>
        <end position="24"/>
    </location>
</feature>
<feature type="topological domain" description="Cytoplasmic" evidence="1">
    <location>
        <begin position="25"/>
        <end position="52"/>
    </location>
</feature>
<feature type="transmembrane region" description="Helical" evidence="1">
    <location>
        <begin position="53"/>
        <end position="73"/>
    </location>
</feature>
<feature type="topological domain" description="Periplasmic" evidence="1">
    <location>
        <begin position="74"/>
        <end position="80"/>
    </location>
</feature>
<feature type="transmembrane region" description="Helical" evidence="1">
    <location>
        <begin position="81"/>
        <end position="101"/>
    </location>
</feature>
<feature type="topological domain" description="Cytoplasmic" evidence="1">
    <location>
        <begin position="102"/>
        <end position="111"/>
    </location>
</feature>
<feature type="transmembrane region" description="Helical" evidence="1">
    <location>
        <begin position="112"/>
        <end position="132"/>
    </location>
</feature>
<feature type="topological domain" description="Periplasmic" evidence="1">
    <location>
        <begin position="133"/>
        <end position="137"/>
    </location>
</feature>
<feature type="transmembrane region" description="Helical" evidence="1">
    <location>
        <begin position="138"/>
        <end position="158"/>
    </location>
</feature>
<feature type="topological domain" description="Cytoplasmic" evidence="1">
    <location>
        <begin position="159"/>
        <end position="205"/>
    </location>
</feature>
<gene>
    <name evidence="1" type="primary">plsY</name>
    <name type="synonym">ygiH</name>
    <name type="ordered locus">EcHS_A3237</name>
</gene>
<organism>
    <name type="scientific">Escherichia coli O9:H4 (strain HS)</name>
    <dbReference type="NCBI Taxonomy" id="331112"/>
    <lineage>
        <taxon>Bacteria</taxon>
        <taxon>Pseudomonadati</taxon>
        <taxon>Pseudomonadota</taxon>
        <taxon>Gammaproteobacteria</taxon>
        <taxon>Enterobacterales</taxon>
        <taxon>Enterobacteriaceae</taxon>
        <taxon>Escherichia</taxon>
    </lineage>
</organism>
<sequence>MSAIAPGMILIAYLCGSISSAILVCRLCGLPDPRTSGSGNPGATNVLRIGGKGAAVAVLIFDVLKGMLPVWGAYELGVSPFWLGLIAIAACLGHIWPVFFGFKGGKGVATAFGAIAPIGWDLTGVMAGTWLLTVLLSGYSSLGAIVSALIAPFYVWWFKPQFTFPVSMLSCLILLRHHDNIQRLWRRQETKIWTKFKRKREKDPE</sequence>
<protein>
    <recommendedName>
        <fullName evidence="1">Glycerol-3-phosphate acyltransferase</fullName>
    </recommendedName>
    <alternativeName>
        <fullName evidence="1">G3P acyltransferase</fullName>
        <shortName evidence="1">GPAT</shortName>
        <ecNumber evidence="1">2.3.1.15</ecNumber>
        <ecNumber evidence="1">2.3.1.n5</ecNumber>
    </alternativeName>
    <alternativeName>
        <fullName evidence="1">Lysophosphatidic acid synthase</fullName>
        <shortName evidence="1">LPA synthase</shortName>
    </alternativeName>
</protein>
<comment type="function">
    <text evidence="1">Catalyzes the transfer of an acyl group from acyl-ACP to glycerol-3-phosphate (G3P) to form lysophosphatidic acid (LPA). This enzyme can also utilize acyl-CoA as fatty acyl donor, but not acyl-PO(4).</text>
</comment>
<comment type="catalytic activity">
    <reaction evidence="1">
        <text>sn-glycerol 3-phosphate + an acyl-CoA = a 1-acyl-sn-glycero-3-phosphate + CoA</text>
        <dbReference type="Rhea" id="RHEA:15325"/>
        <dbReference type="ChEBI" id="CHEBI:57287"/>
        <dbReference type="ChEBI" id="CHEBI:57597"/>
        <dbReference type="ChEBI" id="CHEBI:57970"/>
        <dbReference type="ChEBI" id="CHEBI:58342"/>
        <dbReference type="EC" id="2.3.1.15"/>
    </reaction>
</comment>
<comment type="catalytic activity">
    <reaction evidence="1">
        <text>a fatty acyl-[ACP] + sn-glycerol 3-phosphate = a 1-acyl-sn-glycero-3-phosphate + holo-[ACP]</text>
        <dbReference type="Rhea" id="RHEA:42300"/>
        <dbReference type="Rhea" id="RHEA-COMP:9685"/>
        <dbReference type="Rhea" id="RHEA-COMP:14125"/>
        <dbReference type="ChEBI" id="CHEBI:57597"/>
        <dbReference type="ChEBI" id="CHEBI:57970"/>
        <dbReference type="ChEBI" id="CHEBI:64479"/>
        <dbReference type="ChEBI" id="CHEBI:138651"/>
        <dbReference type="EC" id="2.3.1.n5"/>
    </reaction>
</comment>
<comment type="pathway">
    <text evidence="1">Lipid metabolism; phospholipid metabolism.</text>
</comment>
<comment type="subunit">
    <text evidence="1">Probably interacts with PlsX.</text>
</comment>
<comment type="subcellular location">
    <subcellularLocation>
        <location evidence="1">Cell inner membrane</location>
        <topology evidence="1">Multi-pass membrane protein</topology>
    </subcellularLocation>
</comment>
<comment type="similarity">
    <text evidence="1">Belongs to the PlsY family.</text>
</comment>
<keyword id="KW-0997">Cell inner membrane</keyword>
<keyword id="KW-1003">Cell membrane</keyword>
<keyword id="KW-0444">Lipid biosynthesis</keyword>
<keyword id="KW-0443">Lipid metabolism</keyword>
<keyword id="KW-0472">Membrane</keyword>
<keyword id="KW-0594">Phospholipid biosynthesis</keyword>
<keyword id="KW-1208">Phospholipid metabolism</keyword>
<keyword id="KW-0808">Transferase</keyword>
<keyword id="KW-0812">Transmembrane</keyword>
<keyword id="KW-1133">Transmembrane helix</keyword>